<feature type="chain" id="PRO_1000061128" description="Adenosylhomocysteinase">
    <location>
        <begin position="1"/>
        <end position="472"/>
    </location>
</feature>
<feature type="binding site" evidence="1">
    <location>
        <position position="64"/>
    </location>
    <ligand>
        <name>substrate</name>
    </ligand>
</feature>
<feature type="binding site" evidence="1">
    <location>
        <position position="138"/>
    </location>
    <ligand>
        <name>substrate</name>
    </ligand>
</feature>
<feature type="binding site" evidence="1">
    <location>
        <position position="198"/>
    </location>
    <ligand>
        <name>substrate</name>
    </ligand>
</feature>
<feature type="binding site" evidence="1">
    <location>
        <begin position="199"/>
        <end position="201"/>
    </location>
    <ligand>
        <name>NAD(+)</name>
        <dbReference type="ChEBI" id="CHEBI:57540"/>
    </ligand>
</feature>
<feature type="binding site" evidence="1">
    <location>
        <position position="228"/>
    </location>
    <ligand>
        <name>substrate</name>
    </ligand>
</feature>
<feature type="binding site" evidence="1">
    <location>
        <position position="232"/>
    </location>
    <ligand>
        <name>substrate</name>
    </ligand>
</feature>
<feature type="binding site" evidence="1">
    <location>
        <position position="233"/>
    </location>
    <ligand>
        <name>NAD(+)</name>
        <dbReference type="ChEBI" id="CHEBI:57540"/>
    </ligand>
</feature>
<feature type="binding site" evidence="1">
    <location>
        <begin position="262"/>
        <end position="267"/>
    </location>
    <ligand>
        <name>NAD(+)</name>
        <dbReference type="ChEBI" id="CHEBI:57540"/>
    </ligand>
</feature>
<feature type="binding site" evidence="1">
    <location>
        <position position="285"/>
    </location>
    <ligand>
        <name>NAD(+)</name>
        <dbReference type="ChEBI" id="CHEBI:57540"/>
    </ligand>
</feature>
<feature type="binding site" evidence="1">
    <location>
        <position position="320"/>
    </location>
    <ligand>
        <name>NAD(+)</name>
        <dbReference type="ChEBI" id="CHEBI:57540"/>
    </ligand>
</feature>
<feature type="binding site" evidence="1">
    <location>
        <begin position="341"/>
        <end position="343"/>
    </location>
    <ligand>
        <name>NAD(+)</name>
        <dbReference type="ChEBI" id="CHEBI:57540"/>
    </ligand>
</feature>
<feature type="binding site" evidence="1">
    <location>
        <position position="386"/>
    </location>
    <ligand>
        <name>NAD(+)</name>
        <dbReference type="ChEBI" id="CHEBI:57540"/>
    </ligand>
</feature>
<evidence type="ECO:0000255" key="1">
    <source>
        <dbReference type="HAMAP-Rule" id="MF_00563"/>
    </source>
</evidence>
<organism>
    <name type="scientific">Prochlorococcus marinus (strain MIT 9215)</name>
    <dbReference type="NCBI Taxonomy" id="93060"/>
    <lineage>
        <taxon>Bacteria</taxon>
        <taxon>Bacillati</taxon>
        <taxon>Cyanobacteriota</taxon>
        <taxon>Cyanophyceae</taxon>
        <taxon>Synechococcales</taxon>
        <taxon>Prochlorococcaceae</taxon>
        <taxon>Prochlorococcus</taxon>
    </lineage>
</organism>
<comment type="function">
    <text evidence="1">May play a key role in the regulation of the intracellular concentration of adenosylhomocysteine.</text>
</comment>
<comment type="catalytic activity">
    <reaction evidence="1">
        <text>S-adenosyl-L-homocysteine + H2O = L-homocysteine + adenosine</text>
        <dbReference type="Rhea" id="RHEA:21708"/>
        <dbReference type="ChEBI" id="CHEBI:15377"/>
        <dbReference type="ChEBI" id="CHEBI:16335"/>
        <dbReference type="ChEBI" id="CHEBI:57856"/>
        <dbReference type="ChEBI" id="CHEBI:58199"/>
        <dbReference type="EC" id="3.13.2.1"/>
    </reaction>
</comment>
<comment type="cofactor">
    <cofactor evidence="1">
        <name>NAD(+)</name>
        <dbReference type="ChEBI" id="CHEBI:57540"/>
    </cofactor>
    <text evidence="1">Binds 1 NAD(+) per subunit.</text>
</comment>
<comment type="pathway">
    <text evidence="1">Amino-acid biosynthesis; L-homocysteine biosynthesis; L-homocysteine from S-adenosyl-L-homocysteine: step 1/1.</text>
</comment>
<comment type="subcellular location">
    <subcellularLocation>
        <location evidence="1">Cytoplasm</location>
    </subcellularLocation>
</comment>
<comment type="similarity">
    <text evidence="1">Belongs to the adenosylhomocysteinase family.</text>
</comment>
<protein>
    <recommendedName>
        <fullName evidence="1">Adenosylhomocysteinase</fullName>
        <ecNumber evidence="1">3.13.2.1</ecNumber>
    </recommendedName>
    <alternativeName>
        <fullName evidence="1">S-adenosyl-L-homocysteine hydrolase</fullName>
        <shortName evidence="1">AdoHcyase</shortName>
    </alternativeName>
</protein>
<dbReference type="EC" id="3.13.2.1" evidence="1"/>
<dbReference type="EMBL" id="CP000825">
    <property type="protein sequence ID" value="ABV51512.1"/>
    <property type="molecule type" value="Genomic_DNA"/>
</dbReference>
<dbReference type="RefSeq" id="WP_012008505.1">
    <property type="nucleotide sequence ID" value="NC_009840.1"/>
</dbReference>
<dbReference type="SMR" id="A8G7D1"/>
<dbReference type="STRING" id="93060.P9215_18991"/>
<dbReference type="KEGG" id="pmh:P9215_18991"/>
<dbReference type="eggNOG" id="COG0499">
    <property type="taxonomic scope" value="Bacteria"/>
</dbReference>
<dbReference type="HOGENOM" id="CLU_025194_2_1_3"/>
<dbReference type="OrthoDB" id="9802717at2"/>
<dbReference type="UniPathway" id="UPA00314">
    <property type="reaction ID" value="UER00076"/>
</dbReference>
<dbReference type="Proteomes" id="UP000002014">
    <property type="component" value="Chromosome"/>
</dbReference>
<dbReference type="GO" id="GO:0005829">
    <property type="term" value="C:cytosol"/>
    <property type="evidence" value="ECO:0007669"/>
    <property type="project" value="TreeGrafter"/>
</dbReference>
<dbReference type="GO" id="GO:0004013">
    <property type="term" value="F:adenosylhomocysteinase activity"/>
    <property type="evidence" value="ECO:0007669"/>
    <property type="project" value="UniProtKB-UniRule"/>
</dbReference>
<dbReference type="GO" id="GO:0071269">
    <property type="term" value="P:L-homocysteine biosynthetic process"/>
    <property type="evidence" value="ECO:0007669"/>
    <property type="project" value="UniProtKB-UniRule"/>
</dbReference>
<dbReference type="GO" id="GO:0006730">
    <property type="term" value="P:one-carbon metabolic process"/>
    <property type="evidence" value="ECO:0007669"/>
    <property type="project" value="UniProtKB-KW"/>
</dbReference>
<dbReference type="GO" id="GO:0033353">
    <property type="term" value="P:S-adenosylmethionine cycle"/>
    <property type="evidence" value="ECO:0007669"/>
    <property type="project" value="TreeGrafter"/>
</dbReference>
<dbReference type="CDD" id="cd00401">
    <property type="entry name" value="SAHH"/>
    <property type="match status" value="1"/>
</dbReference>
<dbReference type="FunFam" id="3.40.50.720:FF:000004">
    <property type="entry name" value="Adenosylhomocysteinase"/>
    <property type="match status" value="1"/>
</dbReference>
<dbReference type="Gene3D" id="3.40.50.1480">
    <property type="entry name" value="Adenosylhomocysteinase-like"/>
    <property type="match status" value="1"/>
</dbReference>
<dbReference type="Gene3D" id="3.40.50.720">
    <property type="entry name" value="NAD(P)-binding Rossmann-like Domain"/>
    <property type="match status" value="1"/>
</dbReference>
<dbReference type="HAMAP" id="MF_00563">
    <property type="entry name" value="AdoHcyase"/>
    <property type="match status" value="1"/>
</dbReference>
<dbReference type="InterPro" id="IPR042172">
    <property type="entry name" value="Adenosylhomocyst_ase-like_sf"/>
</dbReference>
<dbReference type="InterPro" id="IPR000043">
    <property type="entry name" value="Adenosylhomocysteinase-like"/>
</dbReference>
<dbReference type="InterPro" id="IPR015878">
    <property type="entry name" value="Ado_hCys_hydrolase_NAD-bd"/>
</dbReference>
<dbReference type="InterPro" id="IPR036291">
    <property type="entry name" value="NAD(P)-bd_dom_sf"/>
</dbReference>
<dbReference type="InterPro" id="IPR020082">
    <property type="entry name" value="S-Ado-L-homoCys_hydrolase_CS"/>
</dbReference>
<dbReference type="NCBIfam" id="TIGR00936">
    <property type="entry name" value="ahcY"/>
    <property type="match status" value="1"/>
</dbReference>
<dbReference type="NCBIfam" id="NF004005">
    <property type="entry name" value="PRK05476.2-3"/>
    <property type="match status" value="1"/>
</dbReference>
<dbReference type="PANTHER" id="PTHR23420">
    <property type="entry name" value="ADENOSYLHOMOCYSTEINASE"/>
    <property type="match status" value="1"/>
</dbReference>
<dbReference type="PANTHER" id="PTHR23420:SF0">
    <property type="entry name" value="ADENOSYLHOMOCYSTEINASE"/>
    <property type="match status" value="1"/>
</dbReference>
<dbReference type="Pfam" id="PF05221">
    <property type="entry name" value="AdoHcyase"/>
    <property type="match status" value="1"/>
</dbReference>
<dbReference type="Pfam" id="PF00670">
    <property type="entry name" value="AdoHcyase_NAD"/>
    <property type="match status" value="1"/>
</dbReference>
<dbReference type="PIRSF" id="PIRSF001109">
    <property type="entry name" value="Ad_hcy_hydrolase"/>
    <property type="match status" value="1"/>
</dbReference>
<dbReference type="SMART" id="SM00996">
    <property type="entry name" value="AdoHcyase"/>
    <property type="match status" value="1"/>
</dbReference>
<dbReference type="SMART" id="SM00997">
    <property type="entry name" value="AdoHcyase_NAD"/>
    <property type="match status" value="1"/>
</dbReference>
<dbReference type="SUPFAM" id="SSF52283">
    <property type="entry name" value="Formate/glycerate dehydrogenase catalytic domain-like"/>
    <property type="match status" value="1"/>
</dbReference>
<dbReference type="SUPFAM" id="SSF51735">
    <property type="entry name" value="NAD(P)-binding Rossmann-fold domains"/>
    <property type="match status" value="1"/>
</dbReference>
<dbReference type="PROSITE" id="PS00738">
    <property type="entry name" value="ADOHCYASE_1"/>
    <property type="match status" value="1"/>
</dbReference>
<dbReference type="PROSITE" id="PS00739">
    <property type="entry name" value="ADOHCYASE_2"/>
    <property type="match status" value="1"/>
</dbReference>
<reference key="1">
    <citation type="journal article" date="2007" name="PLoS Genet.">
        <title>Patterns and implications of gene gain and loss in the evolution of Prochlorococcus.</title>
        <authorList>
            <person name="Kettler G.C."/>
            <person name="Martiny A.C."/>
            <person name="Huang K."/>
            <person name="Zucker J."/>
            <person name="Coleman M.L."/>
            <person name="Rodrigue S."/>
            <person name="Chen F."/>
            <person name="Lapidus A."/>
            <person name="Ferriera S."/>
            <person name="Johnson J."/>
            <person name="Steglich C."/>
            <person name="Church G.M."/>
            <person name="Richardson P."/>
            <person name="Chisholm S.W."/>
        </authorList>
    </citation>
    <scope>NUCLEOTIDE SEQUENCE [LARGE SCALE GENOMIC DNA]</scope>
    <source>
        <strain>MIT 9215</strain>
    </source>
</reference>
<accession>A8G7D1</accession>
<gene>
    <name evidence="1" type="primary">ahcY</name>
    <name type="ordered locus">P9215_18991</name>
</gene>
<sequence>MVISNSIKTSVPHFVISDISLSDFGRKEIKIAETEMPGLMALRDKYQSEKPLKGAKIAGSLHMTIQTAVLIETLVDLGAQVKWASCNIFSTQDHAAAAIADRGIPVFAKKGETLDEYWQYTHYILDWGSDSPNMILDDGGDATGLLILGSKAEKDLSVLDNPSNEEETALFSSIKSKLQVDGSFYSRIKSNIIGVTEETTTGVARLYQLQKQKSLPFPAINVNDSVTKSKFDNLYGCRESLVDSIKRATDVMIAGKVALVIGFGDVGKGSAQSLRGLGAIVKVAEVDPICALQAAMEGYSVVRLEDVVEDIDIFVTATGNYQVITKENLVKMKNEAIVCNIGHFDNEIDVASLKNYPWENIKPQVDHITLPSGNKIILLAEGRLVNLGCATGHPSFVMSNSFTNQVLAQIELFNKSEQYAKEVYVLPKHLDEMVARLHLDKIGAKLTKLTKEQADYINVSVEGPYKSELYRY</sequence>
<keyword id="KW-0963">Cytoplasm</keyword>
<keyword id="KW-0378">Hydrolase</keyword>
<keyword id="KW-0520">NAD</keyword>
<keyword id="KW-0554">One-carbon metabolism</keyword>
<name>SAHH_PROM2</name>
<proteinExistence type="inferred from homology"/>